<proteinExistence type="inferred from homology"/>
<comment type="function">
    <text evidence="1">Catalyzes a reversible aldol reaction between acetaldehyde and D-glyceraldehyde 3-phosphate to generate 2-deoxy-D-ribose 5-phosphate.</text>
</comment>
<comment type="catalytic activity">
    <reaction evidence="1">
        <text>2-deoxy-D-ribose 5-phosphate = D-glyceraldehyde 3-phosphate + acetaldehyde</text>
        <dbReference type="Rhea" id="RHEA:12821"/>
        <dbReference type="ChEBI" id="CHEBI:15343"/>
        <dbReference type="ChEBI" id="CHEBI:59776"/>
        <dbReference type="ChEBI" id="CHEBI:62877"/>
        <dbReference type="EC" id="4.1.2.4"/>
    </reaction>
</comment>
<comment type="pathway">
    <text evidence="1">Carbohydrate degradation; 2-deoxy-D-ribose 1-phosphate degradation; D-glyceraldehyde 3-phosphate and acetaldehyde from 2-deoxy-alpha-D-ribose 1-phosphate: step 2/2.</text>
</comment>
<comment type="subcellular location">
    <subcellularLocation>
        <location evidence="1">Cytoplasm</location>
    </subcellularLocation>
</comment>
<comment type="similarity">
    <text evidence="1">Belongs to the DeoC/FbaB aldolase family. DeoC type 2 subfamily.</text>
</comment>
<dbReference type="EC" id="4.1.2.4" evidence="1"/>
<dbReference type="EMBL" id="CP000783">
    <property type="protein sequence ID" value="ABU78591.1"/>
    <property type="molecule type" value="Genomic_DNA"/>
</dbReference>
<dbReference type="RefSeq" id="WP_007767250.1">
    <property type="nucleotide sequence ID" value="NC_009778.1"/>
</dbReference>
<dbReference type="SMR" id="A7MGB0"/>
<dbReference type="GeneID" id="56732050"/>
<dbReference type="KEGG" id="esa:ESA_03370"/>
<dbReference type="HOGENOM" id="CLU_053595_3_1_6"/>
<dbReference type="UniPathway" id="UPA00002">
    <property type="reaction ID" value="UER00468"/>
</dbReference>
<dbReference type="Proteomes" id="UP000000260">
    <property type="component" value="Chromosome"/>
</dbReference>
<dbReference type="GO" id="GO:0005737">
    <property type="term" value="C:cytoplasm"/>
    <property type="evidence" value="ECO:0007669"/>
    <property type="project" value="UniProtKB-SubCell"/>
</dbReference>
<dbReference type="GO" id="GO:0004139">
    <property type="term" value="F:deoxyribose-phosphate aldolase activity"/>
    <property type="evidence" value="ECO:0007669"/>
    <property type="project" value="UniProtKB-UniRule"/>
</dbReference>
<dbReference type="GO" id="GO:0006018">
    <property type="term" value="P:2-deoxyribose 1-phosphate catabolic process"/>
    <property type="evidence" value="ECO:0007669"/>
    <property type="project" value="UniProtKB-UniRule"/>
</dbReference>
<dbReference type="GO" id="GO:0016052">
    <property type="term" value="P:carbohydrate catabolic process"/>
    <property type="evidence" value="ECO:0007669"/>
    <property type="project" value="TreeGrafter"/>
</dbReference>
<dbReference type="GO" id="GO:0009264">
    <property type="term" value="P:deoxyribonucleotide catabolic process"/>
    <property type="evidence" value="ECO:0007669"/>
    <property type="project" value="InterPro"/>
</dbReference>
<dbReference type="CDD" id="cd00959">
    <property type="entry name" value="DeoC"/>
    <property type="match status" value="1"/>
</dbReference>
<dbReference type="FunFam" id="3.20.20.70:FF:000034">
    <property type="entry name" value="Deoxyribose-phosphate aldolase"/>
    <property type="match status" value="1"/>
</dbReference>
<dbReference type="Gene3D" id="3.20.20.70">
    <property type="entry name" value="Aldolase class I"/>
    <property type="match status" value="1"/>
</dbReference>
<dbReference type="HAMAP" id="MF_00592">
    <property type="entry name" value="DeoC_type2"/>
    <property type="match status" value="1"/>
</dbReference>
<dbReference type="InterPro" id="IPR013785">
    <property type="entry name" value="Aldolase_TIM"/>
</dbReference>
<dbReference type="InterPro" id="IPR011343">
    <property type="entry name" value="DeoC"/>
</dbReference>
<dbReference type="InterPro" id="IPR002915">
    <property type="entry name" value="DeoC/FbaB/LacD_aldolase"/>
</dbReference>
<dbReference type="InterPro" id="IPR023649">
    <property type="entry name" value="DeoC_typeII"/>
</dbReference>
<dbReference type="NCBIfam" id="TIGR00126">
    <property type="entry name" value="deoC"/>
    <property type="match status" value="1"/>
</dbReference>
<dbReference type="PANTHER" id="PTHR10889">
    <property type="entry name" value="DEOXYRIBOSE-PHOSPHATE ALDOLASE"/>
    <property type="match status" value="1"/>
</dbReference>
<dbReference type="PANTHER" id="PTHR10889:SF3">
    <property type="entry name" value="DEOXYRIBOSE-PHOSPHATE ALDOLASE"/>
    <property type="match status" value="1"/>
</dbReference>
<dbReference type="Pfam" id="PF01791">
    <property type="entry name" value="DeoC"/>
    <property type="match status" value="1"/>
</dbReference>
<dbReference type="PIRSF" id="PIRSF001357">
    <property type="entry name" value="DeoC"/>
    <property type="match status" value="1"/>
</dbReference>
<dbReference type="SMART" id="SM01133">
    <property type="entry name" value="DeoC"/>
    <property type="match status" value="1"/>
</dbReference>
<dbReference type="SUPFAM" id="SSF51569">
    <property type="entry name" value="Aldolase"/>
    <property type="match status" value="1"/>
</dbReference>
<accession>A7MGB0</accession>
<keyword id="KW-0963">Cytoplasm</keyword>
<keyword id="KW-0456">Lyase</keyword>
<keyword id="KW-1185">Reference proteome</keyword>
<keyword id="KW-0704">Schiff base</keyword>
<evidence type="ECO:0000255" key="1">
    <source>
        <dbReference type="HAMAP-Rule" id="MF_00592"/>
    </source>
</evidence>
<reference key="1">
    <citation type="journal article" date="2010" name="PLoS ONE">
        <title>Genome sequence of Cronobacter sakazakii BAA-894 and comparative genomic hybridization analysis with other Cronobacter species.</title>
        <authorList>
            <person name="Kucerova E."/>
            <person name="Clifton S.W."/>
            <person name="Xia X.Q."/>
            <person name="Long F."/>
            <person name="Porwollik S."/>
            <person name="Fulton L."/>
            <person name="Fronick C."/>
            <person name="Minx P."/>
            <person name="Kyung K."/>
            <person name="Warren W."/>
            <person name="Fulton R."/>
            <person name="Feng D."/>
            <person name="Wollam A."/>
            <person name="Shah N."/>
            <person name="Bhonagiri V."/>
            <person name="Nash W.E."/>
            <person name="Hallsworth-Pepin K."/>
            <person name="Wilson R.K."/>
            <person name="McClelland M."/>
            <person name="Forsythe S.J."/>
        </authorList>
    </citation>
    <scope>NUCLEOTIDE SEQUENCE [LARGE SCALE GENOMIC DNA]</scope>
    <source>
        <strain>ATCC BAA-894</strain>
    </source>
</reference>
<gene>
    <name evidence="1" type="primary">deoC</name>
    <name type="ordered locus">ESA_03370</name>
</gene>
<name>DEOC_CROS8</name>
<protein>
    <recommendedName>
        <fullName evidence="1">Deoxyribose-phosphate aldolase</fullName>
        <shortName evidence="1">DERA</shortName>
        <ecNumber evidence="1">4.1.2.4</ecNumber>
    </recommendedName>
    <alternativeName>
        <fullName evidence="1">2-deoxy-D-ribose 5-phosphate aldolase</fullName>
    </alternativeName>
    <alternativeName>
        <fullName evidence="1">Phosphodeoxyriboaldolase</fullName>
        <shortName evidence="1">Deoxyriboaldolase</shortName>
    </alternativeName>
</protein>
<organism>
    <name type="scientific">Cronobacter sakazakii (strain ATCC BAA-894)</name>
    <name type="common">Enterobacter sakazakii</name>
    <dbReference type="NCBI Taxonomy" id="290339"/>
    <lineage>
        <taxon>Bacteria</taxon>
        <taxon>Pseudomonadati</taxon>
        <taxon>Pseudomonadota</taxon>
        <taxon>Gammaproteobacteria</taxon>
        <taxon>Enterobacterales</taxon>
        <taxon>Enterobacteriaceae</taxon>
        <taxon>Cronobacter</taxon>
    </lineage>
</organism>
<feature type="chain" id="PRO_1000072599" description="Deoxyribose-phosphate aldolase">
    <location>
        <begin position="1"/>
        <end position="259"/>
    </location>
</feature>
<feature type="active site" description="Proton donor/acceptor" evidence="1">
    <location>
        <position position="102"/>
    </location>
</feature>
<feature type="active site" description="Schiff-base intermediate with acetaldehyde" evidence="1">
    <location>
        <position position="167"/>
    </location>
</feature>
<feature type="active site" description="Proton donor/acceptor" evidence="1">
    <location>
        <position position="201"/>
    </location>
</feature>
<sequence length="259" mass="27566">MTDLTKSSLRALQLMDLTTLNDDDTNEKVIALCHQAKTPVGNTAAVCIYPRFIPIARKTLNEQGTPDIRIATVTNFPHGNDDIDIALAETRAAIAYGADEVDVVFPYRALMAGNEQVGFDLVKACKDACAAANVLLKVIIETGELKEEALIRKASEISIKAGADFIKTSTGKVPVNATPESARIMLEVIRDMGVAKTVGFKPAGGVRTAEDAAKYLAVADELLGADWADARHYRFGASSLLASLLQALGHGDGKSASSY</sequence>